<reference key="1">
    <citation type="journal article" date="2012" name="PLoS ONE">
        <title>Characterization of profilin polymorphism in pollen with a focus on multifunctionality.</title>
        <authorList>
            <person name="Jimenez-Lopez J.C."/>
            <person name="Morales S."/>
            <person name="Castro A.J."/>
            <person name="Volkmann D."/>
            <person name="Rodriguez-Garcia M.I."/>
            <person name="Alche Jde D."/>
        </authorList>
    </citation>
    <scope>NUCLEOTIDE SEQUENCE [MRNA]</scope>
    <scope>POLYMORPHISM</scope>
    <source>
        <strain>cv. Picual</strain>
        <tissue>Pollen</tissue>
    </source>
</reference>
<reference key="2">
    <citation type="journal article" date="2013" name="PLoS ONE">
        <title>Analysis of the effects of polymorphism on pollen profilin structural functionality and the generation of conformational, T- and B-cell epitopes.</title>
        <authorList>
            <person name="Jimenez-Lopez J.C."/>
            <person name="Rodriguez-Garcia M.I."/>
            <person name="Alche J.D."/>
        </authorList>
    </citation>
    <scope>3D-STRUCTURE MODELING</scope>
    <scope>DISULFIDE BOND</scope>
</reference>
<protein>
    <recommendedName>
        <fullName>Profilin-2</fullName>
    </recommendedName>
    <alternativeName>
        <fullName>Pollen allergen Ole e 2</fullName>
    </alternativeName>
    <allergenName>Ole e 2</allergenName>
</protein>
<evidence type="ECO:0000250" key="1"/>
<evidence type="ECO:0000305" key="2"/>
<evidence type="ECO:0000305" key="3">
    <source>
    </source>
</evidence>
<proteinExistence type="evidence at protein level"/>
<keyword id="KW-0009">Actin-binding</keyword>
<keyword id="KW-0020">Allergen</keyword>
<keyword id="KW-0963">Cytoplasm</keyword>
<keyword id="KW-0206">Cytoskeleton</keyword>
<keyword id="KW-1015">Disulfide bond</keyword>
<keyword id="KW-0597">Phosphoprotein</keyword>
<dbReference type="EMBL" id="DQ317580">
    <property type="protein sequence ID" value="ABC47423.1"/>
    <property type="molecule type" value="mRNA"/>
</dbReference>
<dbReference type="SMR" id="A4GE55"/>
<dbReference type="Allergome" id="490">
    <property type="allergen name" value="Ole e 2"/>
</dbReference>
<dbReference type="GO" id="GO:0005938">
    <property type="term" value="C:cell cortex"/>
    <property type="evidence" value="ECO:0007669"/>
    <property type="project" value="TreeGrafter"/>
</dbReference>
<dbReference type="GO" id="GO:0005856">
    <property type="term" value="C:cytoskeleton"/>
    <property type="evidence" value="ECO:0007669"/>
    <property type="project" value="UniProtKB-SubCell"/>
</dbReference>
<dbReference type="GO" id="GO:0003785">
    <property type="term" value="F:actin monomer binding"/>
    <property type="evidence" value="ECO:0007669"/>
    <property type="project" value="TreeGrafter"/>
</dbReference>
<dbReference type="CDD" id="cd00148">
    <property type="entry name" value="PROF"/>
    <property type="match status" value="1"/>
</dbReference>
<dbReference type="FunFam" id="3.30.450.30:FF:000001">
    <property type="entry name" value="Profilin"/>
    <property type="match status" value="1"/>
</dbReference>
<dbReference type="Gene3D" id="3.30.450.30">
    <property type="entry name" value="Dynein light chain 2a, cytoplasmic"/>
    <property type="match status" value="1"/>
</dbReference>
<dbReference type="InterPro" id="IPR048278">
    <property type="entry name" value="PFN"/>
</dbReference>
<dbReference type="InterPro" id="IPR005455">
    <property type="entry name" value="PFN_euk"/>
</dbReference>
<dbReference type="InterPro" id="IPR036140">
    <property type="entry name" value="PFN_sf"/>
</dbReference>
<dbReference type="InterPro" id="IPR027310">
    <property type="entry name" value="Profilin_CS"/>
</dbReference>
<dbReference type="PANTHER" id="PTHR11604">
    <property type="entry name" value="PROFILIN"/>
    <property type="match status" value="1"/>
</dbReference>
<dbReference type="PANTHER" id="PTHR11604:SF25">
    <property type="entry name" value="PROFILIN-5"/>
    <property type="match status" value="1"/>
</dbReference>
<dbReference type="Pfam" id="PF00235">
    <property type="entry name" value="Profilin"/>
    <property type="match status" value="1"/>
</dbReference>
<dbReference type="PRINTS" id="PR00392">
    <property type="entry name" value="PROFILIN"/>
</dbReference>
<dbReference type="PRINTS" id="PR01640">
    <property type="entry name" value="PROFILINPLNT"/>
</dbReference>
<dbReference type="SMART" id="SM00392">
    <property type="entry name" value="PROF"/>
    <property type="match status" value="1"/>
</dbReference>
<dbReference type="SUPFAM" id="SSF55770">
    <property type="entry name" value="Profilin (actin-binding protein)"/>
    <property type="match status" value="1"/>
</dbReference>
<dbReference type="PROSITE" id="PS00414">
    <property type="entry name" value="PROFILIN"/>
    <property type="match status" value="1"/>
</dbReference>
<organism>
    <name type="scientific">Olea europaea</name>
    <name type="common">Common olive</name>
    <dbReference type="NCBI Taxonomy" id="4146"/>
    <lineage>
        <taxon>Eukaryota</taxon>
        <taxon>Viridiplantae</taxon>
        <taxon>Streptophyta</taxon>
        <taxon>Embryophyta</taxon>
        <taxon>Tracheophyta</taxon>
        <taxon>Spermatophyta</taxon>
        <taxon>Magnoliopsida</taxon>
        <taxon>eudicotyledons</taxon>
        <taxon>Gunneridae</taxon>
        <taxon>Pentapetalae</taxon>
        <taxon>asterids</taxon>
        <taxon>lamiids</taxon>
        <taxon>Lamiales</taxon>
        <taxon>Oleaceae</taxon>
        <taxon>Oleeae</taxon>
        <taxon>Olea</taxon>
    </lineage>
</organism>
<name>PROBZ_OLEEU</name>
<accession>A4GE55</accession>
<comment type="function">
    <text evidence="1">Binds to actin and affects the structure of the cytoskeleton. At high concentrations, profilin prevents the polymerization of actin, whereas it enhances it at low concentrations (By similarity).</text>
</comment>
<comment type="subunit">
    <text evidence="1">Occurs in many kinds of cells as a complex with monomeric actin in a 1:1 ratio.</text>
</comment>
<comment type="subcellular location">
    <subcellularLocation>
        <location evidence="1">Cytoplasm</location>
        <location evidence="1">Cytoskeleton</location>
    </subcellularLocation>
</comment>
<comment type="PTM">
    <text evidence="1">Phosphorylated by MAP kinases.</text>
</comment>
<comment type="polymorphism">
    <text>Several isoforms of the allergen exist due to polymorphism.</text>
</comment>
<comment type="allergen">
    <text>Causes an allergic reaction in human.</text>
</comment>
<comment type="miscellaneous">
    <text evidence="3">The variability of the residues taking part of IgE-binding epitopes might be responsible of the difference in cross-reactivity among olive pollen cultivars, and between distantly related pollen species, leading to a variable range of allergy reactions among atopic patients.</text>
</comment>
<comment type="similarity">
    <text evidence="2">Belongs to the profilin family.</text>
</comment>
<sequence length="134" mass="14425">MSWQTYVDDHLMCDIEGHEGHRLIAAAIVGHDGSVWAQSATFPQFKPEEMNGIMTDFNEPGHLAPTGLHLGGTKYMVIQGEAGAVIRGKKGSGGITIKKTGQALVCGIYEEPVTPGQCNMVVERLGDYLLEQGL</sequence>
<feature type="initiator methionine" description="Removed" evidence="1">
    <location>
        <position position="1"/>
    </location>
</feature>
<feature type="chain" id="PRO_0000425043" description="Profilin-2">
    <location>
        <begin position="2"/>
        <end position="134"/>
    </location>
</feature>
<feature type="short sequence motif" description="Involved in PIP2 interaction">
    <location>
        <begin position="84"/>
        <end position="100"/>
    </location>
</feature>
<feature type="modified residue" description="Phosphothreonine" evidence="1">
    <location>
        <position position="114"/>
    </location>
</feature>
<feature type="disulfide bond" evidence="3">
    <location>
        <begin position="13"/>
        <end position="118"/>
    </location>
</feature>